<organism>
    <name type="scientific">Pyrococcus abyssi (strain GE5 / Orsay)</name>
    <dbReference type="NCBI Taxonomy" id="272844"/>
    <lineage>
        <taxon>Archaea</taxon>
        <taxon>Methanobacteriati</taxon>
        <taxon>Methanobacteriota</taxon>
        <taxon>Thermococci</taxon>
        <taxon>Thermococcales</taxon>
        <taxon>Thermococcaceae</taxon>
        <taxon>Pyrococcus</taxon>
    </lineage>
</organism>
<accession>Q9V1U7</accession>
<accession>G8ZHW4</accession>
<protein>
    <recommendedName>
        <fullName evidence="1">Large ribosomal subunit protein uL24</fullName>
    </recommendedName>
    <alternativeName>
        <fullName evidence="2">50S ribosomal protein L24</fullName>
    </alternativeName>
</protein>
<comment type="function">
    <text evidence="1">One of two assembly initiator proteins, it binds directly to the 5'-end of the 23S rRNA, where it nucleates assembly of the 50S subunit.</text>
</comment>
<comment type="function">
    <text evidence="1">Located at the polypeptide exit tunnel on the outside of the subunit.</text>
</comment>
<comment type="subunit">
    <text evidence="1">Part of the 50S ribosomal subunit.</text>
</comment>
<comment type="similarity">
    <text evidence="1">Belongs to the universal ribosomal protein uL24 family.</text>
</comment>
<sequence>MRLNSKQPRKQRKFLYNAPLHLRQKMMAAPLSKELREKYKIRNLPVRVGDKVRIMRGDFKGHEGKVVEVDLKRYRIYVEGATLRKTNGTEVFYPIHPSNVMIIELNLDDERRKKIIERRAG</sequence>
<reference key="1">
    <citation type="journal article" date="2003" name="Mol. Microbiol.">
        <title>An integrated analysis of the genome of the hyperthermophilic archaeon Pyrococcus abyssi.</title>
        <authorList>
            <person name="Cohen G.N."/>
            <person name="Barbe V."/>
            <person name="Flament D."/>
            <person name="Galperin M."/>
            <person name="Heilig R."/>
            <person name="Lecompte O."/>
            <person name="Poch O."/>
            <person name="Prieur D."/>
            <person name="Querellou J."/>
            <person name="Ripp R."/>
            <person name="Thierry J.-C."/>
            <person name="Van der Oost J."/>
            <person name="Weissenbach J."/>
            <person name="Zivanovic Y."/>
            <person name="Forterre P."/>
        </authorList>
    </citation>
    <scope>NUCLEOTIDE SEQUENCE [LARGE SCALE GENOMIC DNA]</scope>
    <source>
        <strain>GE5 / Orsay</strain>
    </source>
</reference>
<reference key="2">
    <citation type="journal article" date="2012" name="Curr. Microbiol.">
        <title>Re-annotation of two hyperthermophilic archaea Pyrococcus abyssi GE5 and Pyrococcus furiosus DSM 3638.</title>
        <authorList>
            <person name="Gao J."/>
            <person name="Wang J."/>
        </authorList>
    </citation>
    <scope>GENOME REANNOTATION</scope>
    <source>
        <strain>GE5 / Orsay</strain>
    </source>
</reference>
<dbReference type="EMBL" id="AJ248284">
    <property type="protein sequence ID" value="CAB49252.1"/>
    <property type="molecule type" value="Genomic_DNA"/>
</dbReference>
<dbReference type="EMBL" id="HE613800">
    <property type="protein sequence ID" value="CCE69707.1"/>
    <property type="molecule type" value="Genomic_DNA"/>
</dbReference>
<dbReference type="PIR" id="E75146">
    <property type="entry name" value="E75146"/>
</dbReference>
<dbReference type="RefSeq" id="WP_010867452.1">
    <property type="nucleotide sequence ID" value="NC_000868.1"/>
</dbReference>
<dbReference type="SMR" id="Q9V1U7"/>
<dbReference type="STRING" id="272844.PAB2128"/>
<dbReference type="KEGG" id="pab:PAB2128"/>
<dbReference type="PATRIC" id="fig|272844.11.peg.351"/>
<dbReference type="eggNOG" id="arCOG04094">
    <property type="taxonomic scope" value="Archaea"/>
</dbReference>
<dbReference type="HOGENOM" id="CLU_093240_2_1_2"/>
<dbReference type="OrthoDB" id="10899at2157"/>
<dbReference type="PhylomeDB" id="Q9V1U7"/>
<dbReference type="Proteomes" id="UP000000810">
    <property type="component" value="Chromosome"/>
</dbReference>
<dbReference type="Proteomes" id="UP000009139">
    <property type="component" value="Chromosome"/>
</dbReference>
<dbReference type="GO" id="GO:0015934">
    <property type="term" value="C:large ribosomal subunit"/>
    <property type="evidence" value="ECO:0007669"/>
    <property type="project" value="InterPro"/>
</dbReference>
<dbReference type="GO" id="GO:0019843">
    <property type="term" value="F:rRNA binding"/>
    <property type="evidence" value="ECO:0007669"/>
    <property type="project" value="UniProtKB-UniRule"/>
</dbReference>
<dbReference type="GO" id="GO:0003735">
    <property type="term" value="F:structural constituent of ribosome"/>
    <property type="evidence" value="ECO:0007669"/>
    <property type="project" value="InterPro"/>
</dbReference>
<dbReference type="GO" id="GO:0006412">
    <property type="term" value="P:translation"/>
    <property type="evidence" value="ECO:0007669"/>
    <property type="project" value="UniProtKB-UniRule"/>
</dbReference>
<dbReference type="CDD" id="cd06089">
    <property type="entry name" value="KOW_RPL26"/>
    <property type="match status" value="1"/>
</dbReference>
<dbReference type="FunFam" id="2.30.30.30:FF:000009">
    <property type="entry name" value="60S ribosomal protein L26"/>
    <property type="match status" value="1"/>
</dbReference>
<dbReference type="Gene3D" id="2.30.30.30">
    <property type="match status" value="1"/>
</dbReference>
<dbReference type="HAMAP" id="MF_01326_A">
    <property type="entry name" value="Ribosomal_uL24_A"/>
    <property type="match status" value="1"/>
</dbReference>
<dbReference type="InterPro" id="IPR005824">
    <property type="entry name" value="KOW"/>
</dbReference>
<dbReference type="InterPro" id="IPR014722">
    <property type="entry name" value="Rib_uL2_dom2"/>
</dbReference>
<dbReference type="InterPro" id="IPR005825">
    <property type="entry name" value="Ribosomal_uL24_CS"/>
</dbReference>
<dbReference type="InterPro" id="IPR005756">
    <property type="entry name" value="Ribosomal_uL24_euk/arc"/>
</dbReference>
<dbReference type="InterPro" id="IPR041988">
    <property type="entry name" value="Ribosomal_uL24_KOW"/>
</dbReference>
<dbReference type="InterPro" id="IPR008991">
    <property type="entry name" value="Translation_prot_SH3-like_sf"/>
</dbReference>
<dbReference type="NCBIfam" id="TIGR01080">
    <property type="entry name" value="rplX_A_E"/>
    <property type="match status" value="1"/>
</dbReference>
<dbReference type="PANTHER" id="PTHR11143">
    <property type="entry name" value="60S RIBOSOMAL PROTEIN L26 FAMILY MEMBER"/>
    <property type="match status" value="1"/>
</dbReference>
<dbReference type="Pfam" id="PF00467">
    <property type="entry name" value="KOW"/>
    <property type="match status" value="1"/>
</dbReference>
<dbReference type="Pfam" id="PF16906">
    <property type="entry name" value="Ribosomal_L26"/>
    <property type="match status" value="1"/>
</dbReference>
<dbReference type="SMART" id="SM00739">
    <property type="entry name" value="KOW"/>
    <property type="match status" value="1"/>
</dbReference>
<dbReference type="SUPFAM" id="SSF50104">
    <property type="entry name" value="Translation proteins SH3-like domain"/>
    <property type="match status" value="1"/>
</dbReference>
<dbReference type="PROSITE" id="PS01108">
    <property type="entry name" value="RIBOSOMAL_L24"/>
    <property type="match status" value="1"/>
</dbReference>
<feature type="chain" id="PRO_0000130776" description="Large ribosomal subunit protein uL24">
    <location>
        <begin position="1"/>
        <end position="121"/>
    </location>
</feature>
<evidence type="ECO:0000255" key="1">
    <source>
        <dbReference type="HAMAP-Rule" id="MF_01326"/>
    </source>
</evidence>
<evidence type="ECO:0000305" key="2"/>
<name>RL24_PYRAB</name>
<proteinExistence type="inferred from homology"/>
<gene>
    <name evidence="1" type="primary">rpl24</name>
    <name type="ordered locus">PYRAB03300</name>
    <name type="ORF">PAB2128</name>
</gene>
<keyword id="KW-0687">Ribonucleoprotein</keyword>
<keyword id="KW-0689">Ribosomal protein</keyword>
<keyword id="KW-0694">RNA-binding</keyword>
<keyword id="KW-0699">rRNA-binding</keyword>